<gene>
    <name evidence="1" type="primary">pxpA</name>
    <name type="synonym">ybgL</name>
    <name type="ordered locus">Z0864</name>
    <name type="ordered locus">ECs0738</name>
</gene>
<dbReference type="EC" id="3.5.2.9" evidence="1"/>
<dbReference type="EMBL" id="AE005174">
    <property type="protein sequence ID" value="AAG55036.1"/>
    <property type="molecule type" value="Genomic_DNA"/>
</dbReference>
<dbReference type="EMBL" id="BA000007">
    <property type="protein sequence ID" value="BAB34161.1"/>
    <property type="molecule type" value="Genomic_DNA"/>
</dbReference>
<dbReference type="PIR" id="B90721">
    <property type="entry name" value="B90721"/>
</dbReference>
<dbReference type="PIR" id="H85571">
    <property type="entry name" value="H85571"/>
</dbReference>
<dbReference type="RefSeq" id="NP_308765.1">
    <property type="nucleotide sequence ID" value="NC_002695.1"/>
</dbReference>
<dbReference type="RefSeq" id="WP_000687164.1">
    <property type="nucleotide sequence ID" value="NZ_VOAI01000019.1"/>
</dbReference>
<dbReference type="SMR" id="Q8X9C8"/>
<dbReference type="STRING" id="155864.Z0864"/>
<dbReference type="GeneID" id="917107"/>
<dbReference type="KEGG" id="ece:Z0864"/>
<dbReference type="KEGG" id="ecs:ECs_0738"/>
<dbReference type="PATRIC" id="fig|386585.9.peg.854"/>
<dbReference type="eggNOG" id="COG1540">
    <property type="taxonomic scope" value="Bacteria"/>
</dbReference>
<dbReference type="HOGENOM" id="CLU_069535_0_0_6"/>
<dbReference type="OMA" id="VCIHGDT"/>
<dbReference type="Proteomes" id="UP000000558">
    <property type="component" value="Chromosome"/>
</dbReference>
<dbReference type="Proteomes" id="UP000002519">
    <property type="component" value="Chromosome"/>
</dbReference>
<dbReference type="GO" id="GO:0017168">
    <property type="term" value="F:5-oxoprolinase (ATP-hydrolyzing) activity"/>
    <property type="evidence" value="ECO:0007669"/>
    <property type="project" value="UniProtKB-UniRule"/>
</dbReference>
<dbReference type="GO" id="GO:0005524">
    <property type="term" value="F:ATP binding"/>
    <property type="evidence" value="ECO:0007669"/>
    <property type="project" value="UniProtKB-UniRule"/>
</dbReference>
<dbReference type="GO" id="GO:0005975">
    <property type="term" value="P:carbohydrate metabolic process"/>
    <property type="evidence" value="ECO:0007669"/>
    <property type="project" value="InterPro"/>
</dbReference>
<dbReference type="CDD" id="cd10800">
    <property type="entry name" value="LamB_YcsF_YbgL_like"/>
    <property type="match status" value="1"/>
</dbReference>
<dbReference type="Gene3D" id="3.20.20.370">
    <property type="entry name" value="Glycoside hydrolase/deacetylase"/>
    <property type="match status" value="1"/>
</dbReference>
<dbReference type="HAMAP" id="MF_00691">
    <property type="entry name" value="PxpA"/>
    <property type="match status" value="1"/>
</dbReference>
<dbReference type="InterPro" id="IPR011330">
    <property type="entry name" value="Glyco_hydro/deAcase_b/a-brl"/>
</dbReference>
<dbReference type="InterPro" id="IPR005501">
    <property type="entry name" value="LamB/YcsF/PxpA-like"/>
</dbReference>
<dbReference type="NCBIfam" id="NF003812">
    <property type="entry name" value="PRK05406.1-1"/>
    <property type="match status" value="1"/>
</dbReference>
<dbReference type="NCBIfam" id="NF003814">
    <property type="entry name" value="PRK05406.1-3"/>
    <property type="match status" value="1"/>
</dbReference>
<dbReference type="NCBIfam" id="NF003815">
    <property type="entry name" value="PRK05406.1-4"/>
    <property type="match status" value="1"/>
</dbReference>
<dbReference type="NCBIfam" id="NF003816">
    <property type="entry name" value="PRK05406.1-5"/>
    <property type="match status" value="1"/>
</dbReference>
<dbReference type="PANTHER" id="PTHR30292:SF0">
    <property type="entry name" value="5-OXOPROLINASE SUBUNIT A"/>
    <property type="match status" value="1"/>
</dbReference>
<dbReference type="PANTHER" id="PTHR30292">
    <property type="entry name" value="UNCHARACTERIZED PROTEIN YBGL-RELATED"/>
    <property type="match status" value="1"/>
</dbReference>
<dbReference type="Pfam" id="PF03746">
    <property type="entry name" value="LamB_YcsF"/>
    <property type="match status" value="1"/>
</dbReference>
<dbReference type="SUPFAM" id="SSF88713">
    <property type="entry name" value="Glycoside hydrolase/deacetylase"/>
    <property type="match status" value="1"/>
</dbReference>
<organism>
    <name type="scientific">Escherichia coli O157:H7</name>
    <dbReference type="NCBI Taxonomy" id="83334"/>
    <lineage>
        <taxon>Bacteria</taxon>
        <taxon>Pseudomonadati</taxon>
        <taxon>Pseudomonadota</taxon>
        <taxon>Gammaproteobacteria</taxon>
        <taxon>Enterobacterales</taxon>
        <taxon>Enterobacteriaceae</taxon>
        <taxon>Escherichia</taxon>
    </lineage>
</organism>
<evidence type="ECO:0000255" key="1">
    <source>
        <dbReference type="HAMAP-Rule" id="MF_00691"/>
    </source>
</evidence>
<name>PXPA_ECO57</name>
<keyword id="KW-0067">ATP-binding</keyword>
<keyword id="KW-0378">Hydrolase</keyword>
<keyword id="KW-0547">Nucleotide-binding</keyword>
<keyword id="KW-1185">Reference proteome</keyword>
<feature type="chain" id="PRO_0000185008" description="5-oxoprolinase subunit A">
    <location>
        <begin position="1"/>
        <end position="244"/>
    </location>
</feature>
<reference key="1">
    <citation type="journal article" date="2001" name="Nature">
        <title>Genome sequence of enterohaemorrhagic Escherichia coli O157:H7.</title>
        <authorList>
            <person name="Perna N.T."/>
            <person name="Plunkett G. III"/>
            <person name="Burland V."/>
            <person name="Mau B."/>
            <person name="Glasner J.D."/>
            <person name="Rose D.J."/>
            <person name="Mayhew G.F."/>
            <person name="Evans P.S."/>
            <person name="Gregor J."/>
            <person name="Kirkpatrick H.A."/>
            <person name="Posfai G."/>
            <person name="Hackett J."/>
            <person name="Klink S."/>
            <person name="Boutin A."/>
            <person name="Shao Y."/>
            <person name="Miller L."/>
            <person name="Grotbeck E.J."/>
            <person name="Davis N.W."/>
            <person name="Lim A."/>
            <person name="Dimalanta E.T."/>
            <person name="Potamousis K."/>
            <person name="Apodaca J."/>
            <person name="Anantharaman T.S."/>
            <person name="Lin J."/>
            <person name="Yen G."/>
            <person name="Schwartz D.C."/>
            <person name="Welch R.A."/>
            <person name="Blattner F.R."/>
        </authorList>
    </citation>
    <scope>NUCLEOTIDE SEQUENCE [LARGE SCALE GENOMIC DNA]</scope>
    <source>
        <strain>O157:H7 / EDL933 / ATCC 700927 / EHEC</strain>
    </source>
</reference>
<reference key="2">
    <citation type="journal article" date="2001" name="DNA Res.">
        <title>Complete genome sequence of enterohemorrhagic Escherichia coli O157:H7 and genomic comparison with a laboratory strain K-12.</title>
        <authorList>
            <person name="Hayashi T."/>
            <person name="Makino K."/>
            <person name="Ohnishi M."/>
            <person name="Kurokawa K."/>
            <person name="Ishii K."/>
            <person name="Yokoyama K."/>
            <person name="Han C.-G."/>
            <person name="Ohtsubo E."/>
            <person name="Nakayama K."/>
            <person name="Murata T."/>
            <person name="Tanaka M."/>
            <person name="Tobe T."/>
            <person name="Iida T."/>
            <person name="Takami H."/>
            <person name="Honda T."/>
            <person name="Sasakawa C."/>
            <person name="Ogasawara N."/>
            <person name="Yasunaga T."/>
            <person name="Kuhara S."/>
            <person name="Shiba T."/>
            <person name="Hattori M."/>
            <person name="Shinagawa H."/>
        </authorList>
    </citation>
    <scope>NUCLEOTIDE SEQUENCE [LARGE SCALE GENOMIC DNA]</scope>
    <source>
        <strain>O157:H7 / Sakai / RIMD 0509952 / EHEC</strain>
    </source>
</reference>
<sequence length="244" mass="25864">MKIDLNADLGEGCTSDAELLTLVSSANIACGFHAGDAQTMQACVREAIKNGVAIGAHPSFPDRKNFGRSAMQLPPETVYAQTLYQIGALATITRAQGGVMRHVKPHGMLYNQAAKEAQLADAIARAVYACDPALVLVGLAGSELIRAGKQYGLTTREEVFADRGYQADGSLVPRSQSGALIEDEEQALAQTLEMVQHGRVKSITGEWATVTAQTVCLHGDGEHALAFARRLRSAFAEKGIVVAA</sequence>
<proteinExistence type="inferred from homology"/>
<protein>
    <recommendedName>
        <fullName evidence="1">5-oxoprolinase subunit A</fullName>
        <shortName evidence="1">5-OPase subunit A</shortName>
        <ecNumber evidence="1">3.5.2.9</ecNumber>
    </recommendedName>
    <alternativeName>
        <fullName evidence="1">5-oxoprolinase (ATP-hydrolyzing) subunit A</fullName>
    </alternativeName>
</protein>
<comment type="function">
    <text evidence="1">Catalyzes the cleavage of 5-oxoproline to form L-glutamate coupled to the hydrolysis of ATP to ADP and inorganic phosphate.</text>
</comment>
<comment type="catalytic activity">
    <reaction evidence="1">
        <text>5-oxo-L-proline + ATP + 2 H2O = L-glutamate + ADP + phosphate + H(+)</text>
        <dbReference type="Rhea" id="RHEA:10348"/>
        <dbReference type="ChEBI" id="CHEBI:15377"/>
        <dbReference type="ChEBI" id="CHEBI:15378"/>
        <dbReference type="ChEBI" id="CHEBI:29985"/>
        <dbReference type="ChEBI" id="CHEBI:30616"/>
        <dbReference type="ChEBI" id="CHEBI:43474"/>
        <dbReference type="ChEBI" id="CHEBI:58402"/>
        <dbReference type="ChEBI" id="CHEBI:456216"/>
        <dbReference type="EC" id="3.5.2.9"/>
    </reaction>
</comment>
<comment type="subunit">
    <text evidence="1">Forms a complex composed of PxpA, PxpB and PxpC.</text>
</comment>
<comment type="similarity">
    <text evidence="1">Belongs to the LamB/PxpA family.</text>
</comment>
<accession>Q8X9C8</accession>